<protein>
    <recommendedName>
        <fullName evidence="1">Adenylate kinase</fullName>
        <shortName evidence="1">AK</shortName>
        <ecNumber evidence="1">2.7.4.3</ecNumber>
    </recommendedName>
    <alternativeName>
        <fullName evidence="1">ATP-AMP transphosphorylase</fullName>
    </alternativeName>
    <alternativeName>
        <fullName evidence="1">ATP:AMP phosphotransferase</fullName>
    </alternativeName>
    <alternativeName>
        <fullName evidence="1">Adenylate monophosphate kinase</fullName>
    </alternativeName>
</protein>
<dbReference type="EC" id="2.7.4.3" evidence="1"/>
<dbReference type="EMBL" id="CP000264">
    <property type="protein sequence ID" value="ABD53530.1"/>
    <property type="molecule type" value="Genomic_DNA"/>
</dbReference>
<dbReference type="RefSeq" id="WP_011453738.1">
    <property type="nucleotide sequence ID" value="NC_007802.1"/>
</dbReference>
<dbReference type="SMR" id="Q28UT2"/>
<dbReference type="STRING" id="290400.Jann_0613"/>
<dbReference type="KEGG" id="jan:Jann_0613"/>
<dbReference type="eggNOG" id="COG0563">
    <property type="taxonomic scope" value="Bacteria"/>
</dbReference>
<dbReference type="HOGENOM" id="CLU_032354_4_1_5"/>
<dbReference type="OrthoDB" id="9805030at2"/>
<dbReference type="UniPathway" id="UPA00588">
    <property type="reaction ID" value="UER00649"/>
</dbReference>
<dbReference type="Proteomes" id="UP000008326">
    <property type="component" value="Chromosome"/>
</dbReference>
<dbReference type="GO" id="GO:0005737">
    <property type="term" value="C:cytoplasm"/>
    <property type="evidence" value="ECO:0007669"/>
    <property type="project" value="UniProtKB-SubCell"/>
</dbReference>
<dbReference type="GO" id="GO:0004017">
    <property type="term" value="F:adenylate kinase activity"/>
    <property type="evidence" value="ECO:0007669"/>
    <property type="project" value="UniProtKB-UniRule"/>
</dbReference>
<dbReference type="GO" id="GO:0005524">
    <property type="term" value="F:ATP binding"/>
    <property type="evidence" value="ECO:0007669"/>
    <property type="project" value="UniProtKB-UniRule"/>
</dbReference>
<dbReference type="GO" id="GO:0044209">
    <property type="term" value="P:AMP salvage"/>
    <property type="evidence" value="ECO:0007669"/>
    <property type="project" value="UniProtKB-UniRule"/>
</dbReference>
<dbReference type="CDD" id="cd01428">
    <property type="entry name" value="ADK"/>
    <property type="match status" value="1"/>
</dbReference>
<dbReference type="Gene3D" id="3.40.50.300">
    <property type="entry name" value="P-loop containing nucleotide triphosphate hydrolases"/>
    <property type="match status" value="1"/>
</dbReference>
<dbReference type="HAMAP" id="MF_00235">
    <property type="entry name" value="Adenylate_kinase_Adk"/>
    <property type="match status" value="1"/>
</dbReference>
<dbReference type="InterPro" id="IPR006259">
    <property type="entry name" value="Adenyl_kin_sub"/>
</dbReference>
<dbReference type="InterPro" id="IPR000850">
    <property type="entry name" value="Adenylat/UMP-CMP_kin"/>
</dbReference>
<dbReference type="InterPro" id="IPR033690">
    <property type="entry name" value="Adenylat_kinase_CS"/>
</dbReference>
<dbReference type="InterPro" id="IPR027417">
    <property type="entry name" value="P-loop_NTPase"/>
</dbReference>
<dbReference type="NCBIfam" id="TIGR01351">
    <property type="entry name" value="adk"/>
    <property type="match status" value="1"/>
</dbReference>
<dbReference type="NCBIfam" id="NF001381">
    <property type="entry name" value="PRK00279.1-3"/>
    <property type="match status" value="1"/>
</dbReference>
<dbReference type="NCBIfam" id="NF011100">
    <property type="entry name" value="PRK14527.1"/>
    <property type="match status" value="1"/>
</dbReference>
<dbReference type="NCBIfam" id="NF011104">
    <property type="entry name" value="PRK14531.1"/>
    <property type="match status" value="1"/>
</dbReference>
<dbReference type="NCBIfam" id="NF011105">
    <property type="entry name" value="PRK14532.1"/>
    <property type="match status" value="1"/>
</dbReference>
<dbReference type="PANTHER" id="PTHR23359">
    <property type="entry name" value="NUCLEOTIDE KINASE"/>
    <property type="match status" value="1"/>
</dbReference>
<dbReference type="Pfam" id="PF00406">
    <property type="entry name" value="ADK"/>
    <property type="match status" value="1"/>
</dbReference>
<dbReference type="PRINTS" id="PR00094">
    <property type="entry name" value="ADENYLTKNASE"/>
</dbReference>
<dbReference type="SUPFAM" id="SSF52540">
    <property type="entry name" value="P-loop containing nucleoside triphosphate hydrolases"/>
    <property type="match status" value="1"/>
</dbReference>
<dbReference type="PROSITE" id="PS00113">
    <property type="entry name" value="ADENYLATE_KINASE"/>
    <property type="match status" value="1"/>
</dbReference>
<comment type="function">
    <text evidence="1">Catalyzes the reversible transfer of the terminal phosphate group between ATP and AMP. Plays an important role in cellular energy homeostasis and in adenine nucleotide metabolism.</text>
</comment>
<comment type="catalytic activity">
    <reaction evidence="1">
        <text>AMP + ATP = 2 ADP</text>
        <dbReference type="Rhea" id="RHEA:12973"/>
        <dbReference type="ChEBI" id="CHEBI:30616"/>
        <dbReference type="ChEBI" id="CHEBI:456215"/>
        <dbReference type="ChEBI" id="CHEBI:456216"/>
        <dbReference type="EC" id="2.7.4.3"/>
    </reaction>
</comment>
<comment type="pathway">
    <text evidence="1">Purine metabolism; AMP biosynthesis via salvage pathway; AMP from ADP: step 1/1.</text>
</comment>
<comment type="subunit">
    <text evidence="1">Monomer.</text>
</comment>
<comment type="subcellular location">
    <subcellularLocation>
        <location evidence="1">Cytoplasm</location>
    </subcellularLocation>
</comment>
<comment type="domain">
    <text evidence="1">Consists of three domains, a large central CORE domain and two small peripheral domains, NMPbind and LID, which undergo movements during catalysis. The LID domain closes over the site of phosphoryl transfer upon ATP binding. Assembling and dissambling the active center during each catalytic cycle provides an effective means to prevent ATP hydrolysis.</text>
</comment>
<comment type="similarity">
    <text evidence="1">Belongs to the adenylate kinase family.</text>
</comment>
<sequence length="191" mass="20286">MNIILLGPPGAGKGTQAGILVKDRGMVQLSTGDMLRAARTSGTEMGNLVAGVMDRGELVTDEIVIGLIREQLEAGGSGFIFDGFPRTLAQADALADLLAEVGQTLDHVIAMEVNDEALVGRIVNRAKEAAAAGQPVRADDNEESLKIRLMEYYKKTSPLLGYYHAKEQLRWVPGLGAIDDVAKGIADVLDA</sequence>
<reference key="1">
    <citation type="submission" date="2006-02" db="EMBL/GenBank/DDBJ databases">
        <title>Complete sequence of chromosome of Jannaschia sp. CCS1.</title>
        <authorList>
            <consortium name="US DOE Joint Genome Institute"/>
            <person name="Copeland A."/>
            <person name="Lucas S."/>
            <person name="Lapidus A."/>
            <person name="Barry K."/>
            <person name="Detter J.C."/>
            <person name="Glavina del Rio T."/>
            <person name="Hammon N."/>
            <person name="Israni S."/>
            <person name="Pitluck S."/>
            <person name="Brettin T."/>
            <person name="Bruce D."/>
            <person name="Han C."/>
            <person name="Tapia R."/>
            <person name="Gilna P."/>
            <person name="Chertkov O."/>
            <person name="Saunders E."/>
            <person name="Schmutz J."/>
            <person name="Larimer F."/>
            <person name="Land M."/>
            <person name="Kyrpides N."/>
            <person name="Lykidis A."/>
            <person name="Moran M.A."/>
            <person name="Belas R."/>
            <person name="Ye W."/>
            <person name="Buchan A."/>
            <person name="Gonzalez J.M."/>
            <person name="Schell M.A."/>
            <person name="Richardson P."/>
        </authorList>
    </citation>
    <scope>NUCLEOTIDE SEQUENCE [LARGE SCALE GENOMIC DNA]</scope>
    <source>
        <strain>CCS1</strain>
    </source>
</reference>
<proteinExistence type="inferred from homology"/>
<feature type="chain" id="PRO_1000058844" description="Adenylate kinase">
    <location>
        <begin position="1"/>
        <end position="191"/>
    </location>
</feature>
<feature type="region of interest" description="NMP" evidence="1">
    <location>
        <begin position="30"/>
        <end position="59"/>
    </location>
</feature>
<feature type="region of interest" description="LID" evidence="1">
    <location>
        <begin position="124"/>
        <end position="140"/>
    </location>
</feature>
<feature type="binding site" evidence="1">
    <location>
        <begin position="10"/>
        <end position="15"/>
    </location>
    <ligand>
        <name>ATP</name>
        <dbReference type="ChEBI" id="CHEBI:30616"/>
    </ligand>
</feature>
<feature type="binding site" evidence="1">
    <location>
        <position position="31"/>
    </location>
    <ligand>
        <name>AMP</name>
        <dbReference type="ChEBI" id="CHEBI:456215"/>
    </ligand>
</feature>
<feature type="binding site" evidence="1">
    <location>
        <position position="36"/>
    </location>
    <ligand>
        <name>AMP</name>
        <dbReference type="ChEBI" id="CHEBI:456215"/>
    </ligand>
</feature>
<feature type="binding site" evidence="1">
    <location>
        <begin position="57"/>
        <end position="59"/>
    </location>
    <ligand>
        <name>AMP</name>
        <dbReference type="ChEBI" id="CHEBI:456215"/>
    </ligand>
</feature>
<feature type="binding site" evidence="1">
    <location>
        <begin position="83"/>
        <end position="86"/>
    </location>
    <ligand>
        <name>AMP</name>
        <dbReference type="ChEBI" id="CHEBI:456215"/>
    </ligand>
</feature>
<feature type="binding site" evidence="1">
    <location>
        <position position="90"/>
    </location>
    <ligand>
        <name>AMP</name>
        <dbReference type="ChEBI" id="CHEBI:456215"/>
    </ligand>
</feature>
<feature type="binding site" evidence="1">
    <location>
        <position position="125"/>
    </location>
    <ligand>
        <name>ATP</name>
        <dbReference type="ChEBI" id="CHEBI:30616"/>
    </ligand>
</feature>
<feature type="binding site" evidence="1">
    <location>
        <position position="137"/>
    </location>
    <ligand>
        <name>AMP</name>
        <dbReference type="ChEBI" id="CHEBI:456215"/>
    </ligand>
</feature>
<feature type="binding site" evidence="1">
    <location>
        <position position="148"/>
    </location>
    <ligand>
        <name>AMP</name>
        <dbReference type="ChEBI" id="CHEBI:456215"/>
    </ligand>
</feature>
<feature type="binding site" evidence="1">
    <location>
        <position position="176"/>
    </location>
    <ligand>
        <name>ATP</name>
        <dbReference type="ChEBI" id="CHEBI:30616"/>
    </ligand>
</feature>
<name>KAD_JANSC</name>
<gene>
    <name evidence="1" type="primary">adk</name>
    <name type="ordered locus">Jann_0613</name>
</gene>
<accession>Q28UT2</accession>
<evidence type="ECO:0000255" key="1">
    <source>
        <dbReference type="HAMAP-Rule" id="MF_00235"/>
    </source>
</evidence>
<keyword id="KW-0067">ATP-binding</keyword>
<keyword id="KW-0963">Cytoplasm</keyword>
<keyword id="KW-0418">Kinase</keyword>
<keyword id="KW-0545">Nucleotide biosynthesis</keyword>
<keyword id="KW-0547">Nucleotide-binding</keyword>
<keyword id="KW-1185">Reference proteome</keyword>
<keyword id="KW-0808">Transferase</keyword>
<organism>
    <name type="scientific">Jannaschia sp. (strain CCS1)</name>
    <dbReference type="NCBI Taxonomy" id="290400"/>
    <lineage>
        <taxon>Bacteria</taxon>
        <taxon>Pseudomonadati</taxon>
        <taxon>Pseudomonadota</taxon>
        <taxon>Alphaproteobacteria</taxon>
        <taxon>Rhodobacterales</taxon>
        <taxon>Roseobacteraceae</taxon>
        <taxon>Jannaschia</taxon>
    </lineage>
</organism>